<accession>Q07120</accession>
<proteinExistence type="evidence at protein level"/>
<feature type="chain" id="PRO_0000047195" description="Zinc finger protein Gfi-1">
    <location>
        <begin position="1"/>
        <end position="423"/>
    </location>
</feature>
<feature type="zinc finger region" description="C2H2-type 1" evidence="4">
    <location>
        <begin position="256"/>
        <end position="279"/>
    </location>
</feature>
<feature type="zinc finger region" description="C2H2-type 2" evidence="4">
    <location>
        <begin position="285"/>
        <end position="307"/>
    </location>
</feature>
<feature type="zinc finger region" description="C2H2-type 3" evidence="4">
    <location>
        <begin position="313"/>
        <end position="335"/>
    </location>
</feature>
<feature type="zinc finger region" description="C2H2-type 4" evidence="4">
    <location>
        <begin position="341"/>
        <end position="363"/>
    </location>
</feature>
<feature type="zinc finger region" description="C2H2-type 5" evidence="4">
    <location>
        <begin position="369"/>
        <end position="391"/>
    </location>
</feature>
<feature type="zinc finger region" description="C2H2-type 6" evidence="4">
    <location>
        <begin position="397"/>
        <end position="420"/>
    </location>
</feature>
<feature type="region of interest" description="Disordered" evidence="5">
    <location>
        <begin position="1"/>
        <end position="102"/>
    </location>
</feature>
<feature type="region of interest" description="SNAG domain" evidence="1">
    <location>
        <begin position="1"/>
        <end position="20"/>
    </location>
</feature>
<feature type="region of interest" description="Required for interaction with RELA" evidence="1">
    <location>
        <begin position="141"/>
        <end position="258"/>
    </location>
</feature>
<feature type="compositionally biased region" description="Basic and acidic residues" evidence="5">
    <location>
        <begin position="48"/>
        <end position="57"/>
    </location>
</feature>
<feature type="modified residue" description="Phosphoserine" evidence="9">
    <location>
        <position position="20"/>
    </location>
</feature>
<feature type="modified residue" description="Phosphoserine" evidence="9">
    <location>
        <position position="57"/>
    </location>
</feature>
<feature type="strand" evidence="10">
    <location>
        <begin position="316"/>
        <end position="318"/>
    </location>
</feature>
<feature type="strand" evidence="10">
    <location>
        <begin position="321"/>
        <end position="324"/>
    </location>
</feature>
<feature type="helix" evidence="10">
    <location>
        <begin position="325"/>
        <end position="336"/>
    </location>
</feature>
<feature type="strand" evidence="10">
    <location>
        <begin position="344"/>
        <end position="346"/>
    </location>
</feature>
<feature type="strand" evidence="10">
    <location>
        <begin position="349"/>
        <end position="352"/>
    </location>
</feature>
<feature type="helix" evidence="10">
    <location>
        <begin position="353"/>
        <end position="364"/>
    </location>
</feature>
<feature type="turn" evidence="10">
    <location>
        <begin position="372"/>
        <end position="374"/>
    </location>
</feature>
<feature type="strand" evidence="10">
    <location>
        <begin position="377"/>
        <end position="380"/>
    </location>
</feature>
<feature type="helix" evidence="10">
    <location>
        <begin position="381"/>
        <end position="391"/>
    </location>
</feature>
<reference key="1">
    <citation type="journal article" date="1993" name="Mol. Cell. Biol.">
        <title>Progression of interleukin-2 (IL-2)-dependent rat T cell lymphoma lines to IL-2-independent growth following activation of a gene (Gfi-1) encoding a novel zinc finger protein.</title>
        <authorList>
            <person name="Gilks C.B."/>
            <person name="Bear S.E."/>
            <person name="Grimes H.L."/>
            <person name="Tsichlis P.N."/>
        </authorList>
    </citation>
    <scope>NUCLEOTIDE SEQUENCE [MRNA]</scope>
    <scope>DEVELOPMENTAL STAGE</scope>
    <scope>TISSUE SPECIFICITY</scope>
</reference>
<reference key="2">
    <citation type="journal article" date="2010" name="Oncogene">
        <title>A role of Miz-1 in Gfi-1-mediated transcriptional repression of CDKN1A.</title>
        <authorList>
            <person name="Liu Q."/>
            <person name="Basu S."/>
            <person name="Qiu Y."/>
            <person name="Tang F."/>
            <person name="Dong F."/>
        </authorList>
    </citation>
    <scope>INTERACTION WITH ZBTB17</scope>
    <scope>FUNCTION</scope>
</reference>
<reference key="3">
    <citation type="journal article" date="2012" name="Nat. Commun.">
        <title>Quantitative maps of protein phosphorylation sites across 14 different rat organs and tissues.</title>
        <authorList>
            <person name="Lundby A."/>
            <person name="Secher A."/>
            <person name="Lage K."/>
            <person name="Nordsborg N.B."/>
            <person name="Dmytriyev A."/>
            <person name="Lundby C."/>
            <person name="Olsen J.V."/>
        </authorList>
    </citation>
    <scope>PHOSPHORYLATION [LARGE SCALE ANALYSIS] AT SER-20 AND SER-57</scope>
    <scope>IDENTIFICATION BY MASS SPECTROMETRY [LARGE SCALE ANALYSIS]</scope>
</reference>
<reference key="4">
    <citation type="journal article" date="2010" name="J. Mol. Biol.">
        <title>Solution structure of Gfi-1 zinc domain bound to consensus DNA.</title>
        <authorList>
            <person name="Lee S."/>
            <person name="Doddapaneni K."/>
            <person name="Hogue A."/>
            <person name="McGhee L."/>
            <person name="Meyers S."/>
            <person name="Wu Z."/>
        </authorList>
    </citation>
    <scope>STRUCTURE BY NMR OF 312-393 IN COMPLEX WITH DNA</scope>
</reference>
<gene>
    <name type="primary">Gfi1</name>
    <name type="synonym">Gfi-1</name>
</gene>
<dbReference type="EMBL" id="L06986">
    <property type="protein sequence ID" value="AAA41212.1"/>
    <property type="molecule type" value="mRNA"/>
</dbReference>
<dbReference type="PIR" id="A48152">
    <property type="entry name" value="A48152"/>
</dbReference>
<dbReference type="RefSeq" id="NP_036698.1">
    <property type="nucleotide sequence ID" value="NM_012566.2"/>
</dbReference>
<dbReference type="RefSeq" id="XP_008768139.1">
    <property type="nucleotide sequence ID" value="XM_008769917.4"/>
</dbReference>
<dbReference type="RefSeq" id="XP_008768140.1">
    <property type="nucleotide sequence ID" value="XM_008769918.4"/>
</dbReference>
<dbReference type="RefSeq" id="XP_017454563.1">
    <property type="nucleotide sequence ID" value="XM_017599074.1"/>
</dbReference>
<dbReference type="PDB" id="2KMK">
    <property type="method" value="NMR"/>
    <property type="chains" value="A=312-393"/>
</dbReference>
<dbReference type="PDBsum" id="2KMK"/>
<dbReference type="SMR" id="Q07120"/>
<dbReference type="DIP" id="DIP-48689N"/>
<dbReference type="FunCoup" id="Q07120">
    <property type="interactions" value="30"/>
</dbReference>
<dbReference type="IntAct" id="Q07120">
    <property type="interactions" value="5"/>
</dbReference>
<dbReference type="STRING" id="10116.ENSRNOP00000002807"/>
<dbReference type="iPTMnet" id="Q07120"/>
<dbReference type="PhosphoSitePlus" id="Q07120"/>
<dbReference type="PaxDb" id="10116-ENSRNOP00000002807"/>
<dbReference type="Ensembl" id="ENSRNOT00000002807.4">
    <property type="protein sequence ID" value="ENSRNOP00000002807.2"/>
    <property type="gene ID" value="ENSRNOG00000002042.6"/>
</dbReference>
<dbReference type="GeneID" id="24388"/>
<dbReference type="KEGG" id="rno:24388"/>
<dbReference type="UCSC" id="RGD:2680">
    <property type="organism name" value="rat"/>
</dbReference>
<dbReference type="AGR" id="RGD:2680"/>
<dbReference type="CTD" id="2672"/>
<dbReference type="RGD" id="2680">
    <property type="gene designation" value="Gfi1"/>
</dbReference>
<dbReference type="eggNOG" id="KOG1721">
    <property type="taxonomic scope" value="Eukaryota"/>
</dbReference>
<dbReference type="GeneTree" id="ENSGT00940000156166"/>
<dbReference type="HOGENOM" id="CLU_002678_94_9_1"/>
<dbReference type="InParanoid" id="Q07120"/>
<dbReference type="OrthoDB" id="48897at9989"/>
<dbReference type="PhylomeDB" id="Q07120"/>
<dbReference type="TreeFam" id="TF350784"/>
<dbReference type="EvolutionaryTrace" id="Q07120"/>
<dbReference type="PRO" id="PR:Q07120"/>
<dbReference type="Proteomes" id="UP000002494">
    <property type="component" value="Chromosome 14"/>
</dbReference>
<dbReference type="Bgee" id="ENSRNOG00000002042">
    <property type="expression patterns" value="Expressed in thymus and 8 other cell types or tissues"/>
</dbReference>
<dbReference type="GO" id="GO:0016604">
    <property type="term" value="C:nuclear body"/>
    <property type="evidence" value="ECO:0000266"/>
    <property type="project" value="RGD"/>
</dbReference>
<dbReference type="GO" id="GO:0016363">
    <property type="term" value="C:nuclear matrix"/>
    <property type="evidence" value="ECO:0000266"/>
    <property type="project" value="RGD"/>
</dbReference>
<dbReference type="GO" id="GO:0005634">
    <property type="term" value="C:nucleus"/>
    <property type="evidence" value="ECO:0000266"/>
    <property type="project" value="RGD"/>
</dbReference>
<dbReference type="GO" id="GO:0017053">
    <property type="term" value="C:transcription repressor complex"/>
    <property type="evidence" value="ECO:0000250"/>
    <property type="project" value="UniProtKB"/>
</dbReference>
<dbReference type="GO" id="GO:0003700">
    <property type="term" value="F:DNA-binding transcription factor activity"/>
    <property type="evidence" value="ECO:0000318"/>
    <property type="project" value="GO_Central"/>
</dbReference>
<dbReference type="GO" id="GO:0001217">
    <property type="term" value="F:DNA-binding transcription repressor activity"/>
    <property type="evidence" value="ECO:0000266"/>
    <property type="project" value="RGD"/>
</dbReference>
<dbReference type="GO" id="GO:0001227">
    <property type="term" value="F:DNA-binding transcription repressor activity, RNA polymerase II-specific"/>
    <property type="evidence" value="ECO:0000266"/>
    <property type="project" value="RGD"/>
</dbReference>
<dbReference type="GO" id="GO:0140767">
    <property type="term" value="F:enzyme-substrate adaptor activity"/>
    <property type="evidence" value="ECO:0000250"/>
    <property type="project" value="UniProtKB"/>
</dbReference>
<dbReference type="GO" id="GO:0000978">
    <property type="term" value="F:RNA polymerase II cis-regulatory region sequence-specific DNA binding"/>
    <property type="evidence" value="ECO:0000318"/>
    <property type="project" value="GO_Central"/>
</dbReference>
<dbReference type="GO" id="GO:1990837">
    <property type="term" value="F:sequence-specific double-stranded DNA binding"/>
    <property type="evidence" value="ECO:0000266"/>
    <property type="project" value="RGD"/>
</dbReference>
<dbReference type="GO" id="GO:0000976">
    <property type="term" value="F:transcription cis-regulatory region binding"/>
    <property type="evidence" value="ECO:0000266"/>
    <property type="project" value="RGD"/>
</dbReference>
<dbReference type="GO" id="GO:0008270">
    <property type="term" value="F:zinc ion binding"/>
    <property type="evidence" value="ECO:0007669"/>
    <property type="project" value="UniProtKB-KW"/>
</dbReference>
<dbReference type="GO" id="GO:0045165">
    <property type="term" value="P:cell fate commitment"/>
    <property type="evidence" value="ECO:0000266"/>
    <property type="project" value="RGD"/>
</dbReference>
<dbReference type="GO" id="GO:0001708">
    <property type="term" value="P:cell fate specification"/>
    <property type="evidence" value="ECO:0000266"/>
    <property type="project" value="RGD"/>
</dbReference>
<dbReference type="GO" id="GO:0071222">
    <property type="term" value="P:cellular response to lipopolysaccharide"/>
    <property type="evidence" value="ECO:0000266"/>
    <property type="project" value="RGD"/>
</dbReference>
<dbReference type="GO" id="GO:0006974">
    <property type="term" value="P:DNA damage response"/>
    <property type="evidence" value="ECO:0000250"/>
    <property type="project" value="UniProtKB"/>
</dbReference>
<dbReference type="GO" id="GO:0042491">
    <property type="term" value="P:inner ear auditory receptor cell differentiation"/>
    <property type="evidence" value="ECO:0000266"/>
    <property type="project" value="RGD"/>
</dbReference>
<dbReference type="GO" id="GO:0042472">
    <property type="term" value="P:inner ear morphogenesis"/>
    <property type="evidence" value="ECO:0000266"/>
    <property type="project" value="RGD"/>
</dbReference>
<dbReference type="GO" id="GO:0007638">
    <property type="term" value="P:mechanosensory behavior"/>
    <property type="evidence" value="ECO:0000266"/>
    <property type="project" value="RGD"/>
</dbReference>
<dbReference type="GO" id="GO:0009996">
    <property type="term" value="P:negative regulation of cell fate specification"/>
    <property type="evidence" value="ECO:0000266"/>
    <property type="project" value="RGD"/>
</dbReference>
<dbReference type="GO" id="GO:0045892">
    <property type="term" value="P:negative regulation of DNA-templated transcription"/>
    <property type="evidence" value="ECO:0000266"/>
    <property type="project" value="RGD"/>
</dbReference>
<dbReference type="GO" id="GO:0010977">
    <property type="term" value="P:negative regulation of neuron projection development"/>
    <property type="evidence" value="ECO:0000250"/>
    <property type="project" value="UniProtKB"/>
</dbReference>
<dbReference type="GO" id="GO:0000122">
    <property type="term" value="P:negative regulation of transcription by RNA polymerase II"/>
    <property type="evidence" value="ECO:0000266"/>
    <property type="project" value="RGD"/>
</dbReference>
<dbReference type="GO" id="GO:0042660">
    <property type="term" value="P:positive regulation of cell fate specification"/>
    <property type="evidence" value="ECO:0000266"/>
    <property type="project" value="RGD"/>
</dbReference>
<dbReference type="GO" id="GO:0070105">
    <property type="term" value="P:positive regulation of interleukin-6-mediated signaling pathway"/>
    <property type="evidence" value="ECO:0000266"/>
    <property type="project" value="RGD"/>
</dbReference>
<dbReference type="GO" id="GO:0034121">
    <property type="term" value="P:regulation of toll-like receptor signaling pathway"/>
    <property type="evidence" value="ECO:0000266"/>
    <property type="project" value="RGD"/>
</dbReference>
<dbReference type="GO" id="GO:0006357">
    <property type="term" value="P:regulation of transcription by RNA polymerase II"/>
    <property type="evidence" value="ECO:0000318"/>
    <property type="project" value="GO_Central"/>
</dbReference>
<dbReference type="FunFam" id="3.30.160.60:FF:000489">
    <property type="entry name" value="Zinc finger protein Gfi-1"/>
    <property type="match status" value="1"/>
</dbReference>
<dbReference type="FunFam" id="3.30.160.60:FF:000827">
    <property type="entry name" value="Zinc finger protein Gfi-1"/>
    <property type="match status" value="1"/>
</dbReference>
<dbReference type="FunFam" id="3.30.160.60:FF:000148">
    <property type="entry name" value="zinc finger protein Gfi-1"/>
    <property type="match status" value="1"/>
</dbReference>
<dbReference type="FunFam" id="3.30.160.60:FF:000245">
    <property type="entry name" value="zinc finger protein Gfi-1"/>
    <property type="match status" value="1"/>
</dbReference>
<dbReference type="FunFam" id="3.30.160.60:FF:000208">
    <property type="entry name" value="zinc finger protein Gfi-1b"/>
    <property type="match status" value="1"/>
</dbReference>
<dbReference type="FunFam" id="3.30.160.60:FF:000432">
    <property type="entry name" value="zinc finger protein Gfi-1b isoform X1"/>
    <property type="match status" value="1"/>
</dbReference>
<dbReference type="Gene3D" id="3.30.160.60">
    <property type="entry name" value="Classic Zinc Finger"/>
    <property type="match status" value="6"/>
</dbReference>
<dbReference type="InterPro" id="IPR050717">
    <property type="entry name" value="C2H2-ZF_Transcription_Reg"/>
</dbReference>
<dbReference type="InterPro" id="IPR036236">
    <property type="entry name" value="Znf_C2H2_sf"/>
</dbReference>
<dbReference type="InterPro" id="IPR013087">
    <property type="entry name" value="Znf_C2H2_type"/>
</dbReference>
<dbReference type="PANTHER" id="PTHR14196">
    <property type="entry name" value="ODD-SKIPPED - RELATED"/>
    <property type="match status" value="1"/>
</dbReference>
<dbReference type="PANTHER" id="PTHR14196:SF12">
    <property type="entry name" value="ZINC FINGER PROTEIN 208-LIKE"/>
    <property type="match status" value="1"/>
</dbReference>
<dbReference type="Pfam" id="PF00096">
    <property type="entry name" value="zf-C2H2"/>
    <property type="match status" value="6"/>
</dbReference>
<dbReference type="SMART" id="SM00355">
    <property type="entry name" value="ZnF_C2H2"/>
    <property type="match status" value="6"/>
</dbReference>
<dbReference type="SUPFAM" id="SSF57667">
    <property type="entry name" value="beta-beta-alpha zinc fingers"/>
    <property type="match status" value="3"/>
</dbReference>
<dbReference type="PROSITE" id="PS00028">
    <property type="entry name" value="ZINC_FINGER_C2H2_1"/>
    <property type="match status" value="6"/>
</dbReference>
<dbReference type="PROSITE" id="PS50157">
    <property type="entry name" value="ZINC_FINGER_C2H2_2"/>
    <property type="match status" value="6"/>
</dbReference>
<protein>
    <recommendedName>
        <fullName>Zinc finger protein Gfi-1</fullName>
    </recommendedName>
    <alternativeName>
        <fullName>Growth factor independent protein 1</fullName>
    </alternativeName>
</protein>
<comment type="function">
    <text evidence="2 3 7">Transcription repressor essential for hematopoiesis (By similarity). Functions in a cell-context and development-specific manner (By similarity). Binds to 5'-TAAATCAC[AT]GCA-3' in the promoter region of a large number of genes (By similarity). Component of several complexes, including the EHMT2-GFI1-HDAC1, AJUBA-GFI1-HDAC1 and RCOR-GFI-KDM1A-HDAC complexes, that suppress, via histone deacetylase (HDAC) recruitment, a number of genes implicated in multilineage blood cell development (By similarity). Regulates neutrophil differentiation, promotes proliferation of lymphoid cells, and is required for granulocyte development (By similarity). Inhibits SPI1 transcriptional activity at macrophage-specific genes, repressing macrophage differentiation of myeloid progenitor cells and promoting granulocyte commitment (By similarity). Mediates, together with U2AF1L4, the alternative splicing of CD45 and controls T-cell receptor signaling (By similarity). Regulates the endotoxin-mediated Toll-like receptor (TLR) inflammatory response by antagonizing RELA (By similarity). Cooperates with CBFA2T2 to regulate ITGB1-dependent neurite growth (By similarity). Controls cell-cycle progression by repressing CDKNIA/p21 transcription in response to TGFB1 via recruitment of GFI1 by ZBTB17 to the CDKNIA/p21 and CDKNIB promoters (PubMed:20190815). Required for the maintenance of inner ear hair cells (By similarity). In addition to its role in transcription, acts as a substrate adapter for PRMT1 in the DNA damage response: facilitates the recognition of TP53BP1 and MRE11 substrates by PRMT1, promoting their methylation and the DNA damage response (By similarity).</text>
</comment>
<comment type="subunit">
    <text evidence="1 2 6 7">Interacts with U2AF1L4. Component of RCOR-GFI-KDM1A-HDAC complexes. Interacts directly with RCOR1, KDM1A and HDAC2. Also interacts with HDAC1. regions. Interacts (via the zinc-finger domain) with ARIH2; the interaction prevents GFI1 ubiquitination and proteasomal degradation. Interacts with PIAS3; the interaction relieves the inhibitory effect of PIAS3 on STAT3-mediated transcriptional activity. Forms a complex with EHMT2 and HDAC1 to promote 'Lys-9' dimethylation of H3 (H3K9Me2) and repress expression of target genes. Interacts directly with EHMT2. Component of the GFI1-AJUBA-HDAC1 repressor complex. Interacts directly with AJUBA (via ITS LIM domains); the interaction results in the HDAC-dependent corepression of a subset of GFI1 target genes and, occurs independent of the SNAG domain. Interacts with SPI1; the interaction inhibits SPI1 transcriptional activity targeted at macrophage-specific genes, repressing macrophage differentiation of myeloid progenitor cells and promoting granulocyte commitment (By similarity). Interacts with RUNX1T1; the interaction represses HDAC-mediated transcriptional activity. Interacts with RELA; the interaction occurs on liposaccharide (LPS) stimulation controls RELA DNA binding activity and regulates endotoxin-mediated TOLL-like receptor inflammatory response (By similarity). Interacts (via the C-terminal zinc fingers) with ZBTB17; the interaction results in the recruitment of GFI1 to the CDKN1A/p21 promoter and repression of CDKN1A/p21 transcription.</text>
</comment>
<comment type="interaction">
    <interactant intactId="EBI-4289236">
        <id>Q07120</id>
    </interactant>
    <interactant intactId="EBI-744366">
        <id>Q96KQ7</id>
        <label>EHMT2</label>
    </interactant>
    <organismsDiffer>true</organismsDiffer>
    <experiments>3</experiments>
</comment>
<comment type="interaction">
    <interactant intactId="EBI-4289236">
        <id>Q07120</id>
    </interactant>
    <interactant intactId="EBI-15753185">
        <id>Q13105-1</id>
        <label>ZBTB17</label>
    </interactant>
    <organismsDiffer>true</organismsDiffer>
    <experiments>2</experiments>
</comment>
<comment type="interaction">
    <interactant intactId="EBI-4289236">
        <id>Q07120</id>
    </interactant>
    <interactant intactId="EBI-11598394">
        <id>Q60821</id>
        <label>Zbtb17</label>
    </interactant>
    <organismsDiffer>true</organismsDiffer>
    <experiments>3</experiments>
</comment>
<comment type="subcellular location">
    <subcellularLocation>
        <location evidence="1">Nucleus</location>
    </subcellularLocation>
    <text evidence="1">Colocalizes with PIAS3 and RUNX1T1 in nuclear dots.</text>
</comment>
<comment type="tissue specificity">
    <text evidence="8">Restricted to lymphoid tissues and testes in adult animals.</text>
</comment>
<comment type="developmental stage">
    <text evidence="8">Expression enhanced late after interaction of IL-2 with its receptor, approximately when cells enter S phase.</text>
</comment>
<comment type="domain">
    <text>Zinc fingers 3,4 and 5 are required for DNA binding and for interaction with SPI1.</text>
</comment>
<comment type="domain">
    <text evidence="1">The SNAG domain of GFIs is required for nuclear location and for interaction with some corepressors.</text>
</comment>
<comment type="PTM">
    <text evidence="1">Ubiquitinated.</text>
</comment>
<organism>
    <name type="scientific">Rattus norvegicus</name>
    <name type="common">Rat</name>
    <dbReference type="NCBI Taxonomy" id="10116"/>
    <lineage>
        <taxon>Eukaryota</taxon>
        <taxon>Metazoa</taxon>
        <taxon>Chordata</taxon>
        <taxon>Craniata</taxon>
        <taxon>Vertebrata</taxon>
        <taxon>Euteleostomi</taxon>
        <taxon>Mammalia</taxon>
        <taxon>Eutheria</taxon>
        <taxon>Euarchontoglires</taxon>
        <taxon>Glires</taxon>
        <taxon>Rodentia</taxon>
        <taxon>Myomorpha</taxon>
        <taxon>Muroidea</taxon>
        <taxon>Muridae</taxon>
        <taxon>Murinae</taxon>
        <taxon>Rattus</taxon>
    </lineage>
</organism>
<evidence type="ECO:0000250" key="1"/>
<evidence type="ECO:0000250" key="2">
    <source>
        <dbReference type="UniProtKB" id="P70338"/>
    </source>
</evidence>
<evidence type="ECO:0000250" key="3">
    <source>
        <dbReference type="UniProtKB" id="Q99684"/>
    </source>
</evidence>
<evidence type="ECO:0000255" key="4">
    <source>
        <dbReference type="PROSITE-ProRule" id="PRU00042"/>
    </source>
</evidence>
<evidence type="ECO:0000256" key="5">
    <source>
        <dbReference type="SAM" id="MobiDB-lite"/>
    </source>
</evidence>
<evidence type="ECO:0000269" key="6">
    <source>
    </source>
</evidence>
<evidence type="ECO:0000269" key="7">
    <source>
    </source>
</evidence>
<evidence type="ECO:0000269" key="8">
    <source>
    </source>
</evidence>
<evidence type="ECO:0007744" key="9">
    <source>
    </source>
</evidence>
<evidence type="ECO:0007829" key="10">
    <source>
        <dbReference type="PDB" id="2KMK"/>
    </source>
</evidence>
<name>GFI1_RAT</name>
<sequence>MPRSFLVKSKKAHSYHQPRSPGPDYSLRLETVPVPGRADGGAVSAGESKMEPRERLSPESQLTEAPDRASASPNSCEGSVCDPSSEFEDYWRPPSPSVSPASEKSLCRSLDEAQPYTLPFKPYAWSGLAGSDLRHLVQSYRQCSALERSAGLSLFCERGAESGRPAARYGSEQAAGGAGAGQPGSCGAASGATSAGGLGLYGDFAPAAAGLFERPSTAAGRLYQDRGHELHADKSVGVKVESELLCTRLLLGGGSYKCIKCSKVFSTPHGLEVHVRRSHSGTRPFACEMCGKTFGHAVSLEQHKAVHSQERSFDCKICGKSFKRSSTLSTHLLIHSDTRPYPCQYCGKRFHQKSDMKKHTFIHTGEKPHKCQVCGKAFSQSSNLITHSRKHTGFKPFGCDLCGKGFQRKVDLRRHRETQHGLK</sequence>
<keyword id="KW-0002">3D-structure</keyword>
<keyword id="KW-0238">DNA-binding</keyword>
<keyword id="KW-0479">Metal-binding</keyword>
<keyword id="KW-0539">Nucleus</keyword>
<keyword id="KW-0597">Phosphoprotein</keyword>
<keyword id="KW-1185">Reference proteome</keyword>
<keyword id="KW-0677">Repeat</keyword>
<keyword id="KW-0804">Transcription</keyword>
<keyword id="KW-0805">Transcription regulation</keyword>
<keyword id="KW-0832">Ubl conjugation</keyword>
<keyword id="KW-0862">Zinc</keyword>
<keyword id="KW-0863">Zinc-finger</keyword>